<gene>
    <name evidence="26" type="primary">Sun2</name>
    <name type="synonym">Unc84b</name>
</gene>
<name>SUN2_MOUSE</name>
<sequence length="731" mass="81605">MSRRSQRLTRYSQDDNDGGSSSSGASSVAGSQGTVFKDSPLRTLKRKSSNMKHLSPAPQLGPSSDSHTSYYSESVVRESYIGSPRAVSLARSALLDDHLHSEPYWSGDLRGRRRRGTGGSESSKANGLTAESKASEDFFGSSSGYSSEDDLAGYTDSDQHSSGSRLRSAASRAGSFVWTLVTFPGRLFGLLYWWIGTTWYRLTTAASLLDVFVLTRSRHFSLNLKSFLWFLLLLLLLTGLTYGAWHFYPLGLQTLQPAVVSWWAAKESRKQPEVWESRDASQHFQAEQRVLSRVHSLERRLEALAADFSSNWQKEAIRLERLELRQGAAGHGGGSSLSHEDALSLLEGLVSRREATLKEDLRRDTVAHIQEELATLRAEHHQDSEDLFKKIVQASQESEARVQQLKTEWKSMTQEAFQESSVKELGRLEAQLASLRQELAALTLKQNSVADEVGLLPQKIQAARADVESQFPDWIRQFLLGDRGARSGLLQRDEMHAQLQELENKILTKMAEMQGKSAREAAASLGQILQKEGIVGVTEEQVHRIVKQALQRYSEDRIGMVDYALESGGASVISTRCSETYETKTALLSLFGIPLWYHSQSPRVILQPDVHPGNCWAFQGPQGFAVVRLSARIRPTAVTLEHVPKALSPNSTISSAPKDFAIFGFDEDLQQEGTLLGTFAYDQDGEPIQTFYFQASKMATYQVVELRILTNWGHPEYTCIYRFRVHGEPAH</sequence>
<evidence type="ECO:0000250" key="1"/>
<evidence type="ECO:0000250" key="2">
    <source>
        <dbReference type="UniProtKB" id="Q9UH99"/>
    </source>
</evidence>
<evidence type="ECO:0000255" key="3"/>
<evidence type="ECO:0000255" key="4">
    <source>
        <dbReference type="PROSITE-ProRule" id="PRU00802"/>
    </source>
</evidence>
<evidence type="ECO:0000256" key="5">
    <source>
        <dbReference type="SAM" id="MobiDB-lite"/>
    </source>
</evidence>
<evidence type="ECO:0000269" key="6">
    <source>
    </source>
</evidence>
<evidence type="ECO:0000269" key="7">
    <source>
    </source>
</evidence>
<evidence type="ECO:0000269" key="8">
    <source>
    </source>
</evidence>
<evidence type="ECO:0000269" key="9">
    <source>
    </source>
</evidence>
<evidence type="ECO:0000269" key="10">
    <source>
    </source>
</evidence>
<evidence type="ECO:0000269" key="11">
    <source>
    </source>
</evidence>
<evidence type="ECO:0000269" key="12">
    <source>
    </source>
</evidence>
<evidence type="ECO:0000269" key="13">
    <source>
    </source>
</evidence>
<evidence type="ECO:0000269" key="14">
    <source>
    </source>
</evidence>
<evidence type="ECO:0000269" key="15">
    <source>
    </source>
</evidence>
<evidence type="ECO:0000269" key="16">
    <source>
    </source>
</evidence>
<evidence type="ECO:0000269" key="17">
    <source>
    </source>
</evidence>
<evidence type="ECO:0000269" key="18">
    <source>
    </source>
</evidence>
<evidence type="ECO:0000269" key="19">
    <source>
    </source>
</evidence>
<evidence type="ECO:0000269" key="20">
    <source>
    </source>
</evidence>
<evidence type="ECO:0000303" key="21">
    <source>
    </source>
</evidence>
<evidence type="ECO:0000303" key="22">
    <source>
    </source>
</evidence>
<evidence type="ECO:0000303" key="23">
    <source ref="2"/>
</evidence>
<evidence type="ECO:0000305" key="24"/>
<evidence type="ECO:0000305" key="25">
    <source>
    </source>
</evidence>
<evidence type="ECO:0000312" key="26">
    <source>
        <dbReference type="MGI" id="MGI:2443011"/>
    </source>
</evidence>
<evidence type="ECO:0007744" key="27">
    <source>
    </source>
</evidence>
<evidence type="ECO:0007829" key="28">
    <source>
        <dbReference type="PDB" id="5ED8"/>
    </source>
</evidence>
<evidence type="ECO:0007829" key="29">
    <source>
        <dbReference type="PDB" id="5ED9"/>
    </source>
</evidence>
<reference key="1">
    <citation type="journal article" date="2006" name="DNA Cell Biol.">
        <title>Characterization of the structures involved in localization of the SUN proteins to the nuclear envelope and the centrosome.</title>
        <authorList>
            <person name="Wang Q."/>
            <person name="Du X."/>
            <person name="Cai Z."/>
            <person name="Greene M.I."/>
        </authorList>
    </citation>
    <scope>NUCLEOTIDE SEQUENCE [MRNA] (ISOFORM 2)</scope>
    <scope>SUBCELLULAR LOCATION</scope>
    <scope>SUBUNIT</scope>
    <scope>ASSOCIATION WITH THE CENTROSOME</scope>
</reference>
<reference key="2">
    <citation type="submission" date="2003-07" db="EMBL/GenBank/DDBJ databases">
        <title>NEDO cDNA sequencing project.</title>
        <authorList>
            <person name="Oshima A."/>
            <person name="Takahashi-Fujii A."/>
            <person name="Tanase T."/>
            <person name="Imose N."/>
            <person name="Takeuchi K."/>
            <person name="Arita M."/>
            <person name="Musashino K."/>
            <person name="Yuuki H."/>
            <person name="Hara H."/>
            <person name="Sugiyama T."/>
            <person name="Irie R."/>
            <person name="Otsuki T."/>
            <person name="Sato H."/>
            <person name="Ota T."/>
            <person name="Wakamatsu A."/>
            <person name="Ishii S."/>
            <person name="Yamamoto J."/>
            <person name="Isono Y."/>
            <person name="Kawai-Hio Y."/>
            <person name="Saito K."/>
            <person name="Nishikawa T."/>
            <person name="Kimura K."/>
            <person name="Yamashita H."/>
            <person name="Matsuo K."/>
            <person name="Nakamura Y."/>
            <person name="Sekine M."/>
            <person name="Kikuchi H."/>
            <person name="Kanda K."/>
            <person name="Wagatsuma M."/>
            <person name="Murakawa K."/>
            <person name="Kanehori K."/>
            <person name="Sugiyama A."/>
            <person name="Kawakami B."/>
            <person name="Suzuki Y."/>
            <person name="Sugano S."/>
            <person name="Nagahari K."/>
            <person name="Masuho Y."/>
            <person name="Nagai K."/>
            <person name="Isogai T."/>
        </authorList>
    </citation>
    <scope>NUCLEOTIDE SEQUENCE [MRNA] (ISOFORM 3)</scope>
</reference>
<reference key="3">
    <citation type="journal article" date="2005" name="Science">
        <title>The transcriptional landscape of the mammalian genome.</title>
        <authorList>
            <person name="Carninci P."/>
            <person name="Kasukawa T."/>
            <person name="Katayama S."/>
            <person name="Gough J."/>
            <person name="Frith M.C."/>
            <person name="Maeda N."/>
            <person name="Oyama R."/>
            <person name="Ravasi T."/>
            <person name="Lenhard B."/>
            <person name="Wells C."/>
            <person name="Kodzius R."/>
            <person name="Shimokawa K."/>
            <person name="Bajic V.B."/>
            <person name="Brenner S.E."/>
            <person name="Batalov S."/>
            <person name="Forrest A.R."/>
            <person name="Zavolan M."/>
            <person name="Davis M.J."/>
            <person name="Wilming L.G."/>
            <person name="Aidinis V."/>
            <person name="Allen J.E."/>
            <person name="Ambesi-Impiombato A."/>
            <person name="Apweiler R."/>
            <person name="Aturaliya R.N."/>
            <person name="Bailey T.L."/>
            <person name="Bansal M."/>
            <person name="Baxter L."/>
            <person name="Beisel K.W."/>
            <person name="Bersano T."/>
            <person name="Bono H."/>
            <person name="Chalk A.M."/>
            <person name="Chiu K.P."/>
            <person name="Choudhary V."/>
            <person name="Christoffels A."/>
            <person name="Clutterbuck D.R."/>
            <person name="Crowe M.L."/>
            <person name="Dalla E."/>
            <person name="Dalrymple B.P."/>
            <person name="de Bono B."/>
            <person name="Della Gatta G."/>
            <person name="di Bernardo D."/>
            <person name="Down T."/>
            <person name="Engstrom P."/>
            <person name="Fagiolini M."/>
            <person name="Faulkner G."/>
            <person name="Fletcher C.F."/>
            <person name="Fukushima T."/>
            <person name="Furuno M."/>
            <person name="Futaki S."/>
            <person name="Gariboldi M."/>
            <person name="Georgii-Hemming P."/>
            <person name="Gingeras T.R."/>
            <person name="Gojobori T."/>
            <person name="Green R.E."/>
            <person name="Gustincich S."/>
            <person name="Harbers M."/>
            <person name="Hayashi Y."/>
            <person name="Hensch T.K."/>
            <person name="Hirokawa N."/>
            <person name="Hill D."/>
            <person name="Huminiecki L."/>
            <person name="Iacono M."/>
            <person name="Ikeo K."/>
            <person name="Iwama A."/>
            <person name="Ishikawa T."/>
            <person name="Jakt M."/>
            <person name="Kanapin A."/>
            <person name="Katoh M."/>
            <person name="Kawasawa Y."/>
            <person name="Kelso J."/>
            <person name="Kitamura H."/>
            <person name="Kitano H."/>
            <person name="Kollias G."/>
            <person name="Krishnan S.P."/>
            <person name="Kruger A."/>
            <person name="Kummerfeld S.K."/>
            <person name="Kurochkin I.V."/>
            <person name="Lareau L.F."/>
            <person name="Lazarevic D."/>
            <person name="Lipovich L."/>
            <person name="Liu J."/>
            <person name="Liuni S."/>
            <person name="McWilliam S."/>
            <person name="Madan Babu M."/>
            <person name="Madera M."/>
            <person name="Marchionni L."/>
            <person name="Matsuda H."/>
            <person name="Matsuzawa S."/>
            <person name="Miki H."/>
            <person name="Mignone F."/>
            <person name="Miyake S."/>
            <person name="Morris K."/>
            <person name="Mottagui-Tabar S."/>
            <person name="Mulder N."/>
            <person name="Nakano N."/>
            <person name="Nakauchi H."/>
            <person name="Ng P."/>
            <person name="Nilsson R."/>
            <person name="Nishiguchi S."/>
            <person name="Nishikawa S."/>
            <person name="Nori F."/>
            <person name="Ohara O."/>
            <person name="Okazaki Y."/>
            <person name="Orlando V."/>
            <person name="Pang K.C."/>
            <person name="Pavan W.J."/>
            <person name="Pavesi G."/>
            <person name="Pesole G."/>
            <person name="Petrovsky N."/>
            <person name="Piazza S."/>
            <person name="Reed J."/>
            <person name="Reid J.F."/>
            <person name="Ring B.Z."/>
            <person name="Ringwald M."/>
            <person name="Rost B."/>
            <person name="Ruan Y."/>
            <person name="Salzberg S.L."/>
            <person name="Sandelin A."/>
            <person name="Schneider C."/>
            <person name="Schoenbach C."/>
            <person name="Sekiguchi K."/>
            <person name="Semple C.A."/>
            <person name="Seno S."/>
            <person name="Sessa L."/>
            <person name="Sheng Y."/>
            <person name="Shibata Y."/>
            <person name="Shimada H."/>
            <person name="Shimada K."/>
            <person name="Silva D."/>
            <person name="Sinclair B."/>
            <person name="Sperling S."/>
            <person name="Stupka E."/>
            <person name="Sugiura K."/>
            <person name="Sultana R."/>
            <person name="Takenaka Y."/>
            <person name="Taki K."/>
            <person name="Tammoja K."/>
            <person name="Tan S.L."/>
            <person name="Tang S."/>
            <person name="Taylor M.S."/>
            <person name="Tegner J."/>
            <person name="Teichmann S.A."/>
            <person name="Ueda H.R."/>
            <person name="van Nimwegen E."/>
            <person name="Verardo R."/>
            <person name="Wei C.L."/>
            <person name="Yagi K."/>
            <person name="Yamanishi H."/>
            <person name="Zabarovsky E."/>
            <person name="Zhu S."/>
            <person name="Zimmer A."/>
            <person name="Hide W."/>
            <person name="Bult C."/>
            <person name="Grimmond S.M."/>
            <person name="Teasdale R.D."/>
            <person name="Liu E.T."/>
            <person name="Brusic V."/>
            <person name="Quackenbush J."/>
            <person name="Wahlestedt C."/>
            <person name="Mattick J.S."/>
            <person name="Hume D.A."/>
            <person name="Kai C."/>
            <person name="Sasaki D."/>
            <person name="Tomaru Y."/>
            <person name="Fukuda S."/>
            <person name="Kanamori-Katayama M."/>
            <person name="Suzuki M."/>
            <person name="Aoki J."/>
            <person name="Arakawa T."/>
            <person name="Iida J."/>
            <person name="Imamura K."/>
            <person name="Itoh M."/>
            <person name="Kato T."/>
            <person name="Kawaji H."/>
            <person name="Kawagashira N."/>
            <person name="Kawashima T."/>
            <person name="Kojima M."/>
            <person name="Kondo S."/>
            <person name="Konno H."/>
            <person name="Nakano K."/>
            <person name="Ninomiya N."/>
            <person name="Nishio T."/>
            <person name="Okada M."/>
            <person name="Plessy C."/>
            <person name="Shibata K."/>
            <person name="Shiraki T."/>
            <person name="Suzuki S."/>
            <person name="Tagami M."/>
            <person name="Waki K."/>
            <person name="Watahiki A."/>
            <person name="Okamura-Oho Y."/>
            <person name="Suzuki H."/>
            <person name="Kawai J."/>
            <person name="Hayashizaki Y."/>
        </authorList>
    </citation>
    <scope>NUCLEOTIDE SEQUENCE [LARGE SCALE MRNA] (ISOFORMS 1 AND 2)</scope>
    <source>
        <strain>C57BL/6J</strain>
        <strain>NOD</strain>
        <tissue>Aorta</tissue>
        <tissue>Dendritic cell</tissue>
        <tissue>Spleen</tissue>
        <tissue>Vein</tissue>
    </source>
</reference>
<reference key="4">
    <citation type="submission" date="2005-09" db="EMBL/GenBank/DDBJ databases">
        <authorList>
            <person name="Mural R.J."/>
            <person name="Adams M.D."/>
            <person name="Myers E.W."/>
            <person name="Smith H.O."/>
            <person name="Venter J.C."/>
        </authorList>
    </citation>
    <scope>NUCLEOTIDE SEQUENCE [LARGE SCALE GENOMIC DNA]</scope>
</reference>
<reference key="5">
    <citation type="journal article" date="2002" name="Biochim. Biophys. Acta">
        <title>Isolation of differentially expressed genes in human heart tissues.</title>
        <authorList>
            <person name="Sun G."/>
            <person name="Yuen Chan S."/>
            <person name="Yuan Y."/>
            <person name="Wang Chan K."/>
            <person name="Qiu G."/>
            <person name="Sun K."/>
            <person name="Ping Leung M."/>
        </authorList>
    </citation>
    <scope>TISSUE SPECIFICITY</scope>
</reference>
<reference key="6">
    <citation type="journal article" date="2006" name="J. Cell Biol.">
        <title>Coupling of the nucleus and cytoplasm: role of the LINC complex.</title>
        <authorList>
            <person name="Crisp M."/>
            <person name="Liu Q."/>
            <person name="Roux K."/>
            <person name="Rattner J.B."/>
            <person name="Shanahan C."/>
            <person name="Burke B."/>
            <person name="Stahl P.D."/>
            <person name="Hodzic D."/>
        </authorList>
    </citation>
    <scope>FUNCTION OF THE LINC COMPLEX</scope>
    <scope>INTERACTION WITH LAMINS AND SYNE2</scope>
</reference>
<reference key="7">
    <citation type="journal article" date="2007" name="Proc. Natl. Acad. Sci. U.S.A.">
        <title>Large-scale phosphorylation analysis of mouse liver.</title>
        <authorList>
            <person name="Villen J."/>
            <person name="Beausoleil S.A."/>
            <person name="Gerber S.A."/>
            <person name="Gygi S.P."/>
        </authorList>
    </citation>
    <scope>IDENTIFICATION BY MASS SPECTROMETRY [LARGE SCALE ANALYSIS]</scope>
    <source>
        <tissue>Liver</tissue>
    </source>
</reference>
<reference key="8">
    <citation type="journal article" date="2009" name="J. Cell Sci.">
        <title>Dynamics and molecular interactions of linker of nucleoskeleton and cytoskeleton (LINC) complex proteins.</title>
        <authorList>
            <person name="Ostlund C."/>
            <person name="Folker E.S."/>
            <person name="Choi J.C."/>
            <person name="Gomes E.R."/>
            <person name="Gundersen G.G."/>
            <person name="Worman H.J."/>
        </authorList>
    </citation>
    <scope>SUBCELLULAR LOCATION</scope>
    <scope>FUNCTION</scope>
    <scope>INTERACTION WITH LMNA AND SYN2</scope>
</reference>
<reference key="9">
    <citation type="journal article" date="2009" name="Mol. Cell. Proteomics">
        <title>The mouse C2C12 myoblast cell surface N-linked glycoproteome: identification, glycosite occupancy, and membrane orientation.</title>
        <authorList>
            <person name="Gundry R.L."/>
            <person name="Raginski K."/>
            <person name="Tarasova Y."/>
            <person name="Tchernyshyov I."/>
            <person name="Bausch-Fluck D."/>
            <person name="Elliott S.T."/>
            <person name="Boheler K.R."/>
            <person name="Van Eyk J.E."/>
            <person name="Wollscheid B."/>
        </authorList>
    </citation>
    <scope>GLYCOSYLATION [LARGE SCALE ANALYSIS] AT ASN-650</scope>
    <source>
        <tissue>Myoblast</tissue>
    </source>
</reference>
<reference key="10">
    <citation type="journal article" date="2009" name="Neuron">
        <title>SUN1/2 and Syne/Nesprin-1/2 complexes connect centrosome to the nucleus during neurogenesis and neuronal migration in mice.</title>
        <authorList>
            <person name="Zhang X."/>
            <person name="Lei K."/>
            <person name="Yuan X."/>
            <person name="Wu X."/>
            <person name="Zhuang Y."/>
            <person name="Xu T."/>
            <person name="Xu R."/>
            <person name="Han M."/>
        </authorList>
    </citation>
    <scope>FUNCTION</scope>
    <scope>SUBCELLULAR LOCATION</scope>
    <scope>INTERACTION WITH SYNE2</scope>
</reference>
<reference key="11">
    <citation type="journal article" date="2009" name="Proc. Natl. Acad. Sci. U.S.A.">
        <title>SUN1 and SUN2 play critical but partially redundant roles in anchoring nuclei in skeletal muscle cells in mice.</title>
        <authorList>
            <person name="Lei K."/>
            <person name="Zhang X."/>
            <person name="Ding X."/>
            <person name="Guo X."/>
            <person name="Chen M."/>
            <person name="Zhu B."/>
            <person name="Xu T."/>
            <person name="Zhuang Y."/>
            <person name="Xu R."/>
            <person name="Han M."/>
        </authorList>
    </citation>
    <scope>FUNCTION</scope>
</reference>
<reference key="12">
    <citation type="journal article" date="2010" name="Cell">
        <title>A tissue-specific atlas of mouse protein phosphorylation and expression.</title>
        <authorList>
            <person name="Huttlin E.L."/>
            <person name="Jedrychowski M.P."/>
            <person name="Elias J.E."/>
            <person name="Goswami T."/>
            <person name="Rad R."/>
            <person name="Beausoleil S.A."/>
            <person name="Villen J."/>
            <person name="Haas W."/>
            <person name="Sowa M.E."/>
            <person name="Gygi S.P."/>
        </authorList>
    </citation>
    <scope>PHOSPHORYLATION [LARGE SCALE ANALYSIS] AT SER-12; SER-39; SER-55; THR-117; SER-120; SER-123 AND SER-147</scope>
    <scope>IDENTIFICATION BY MASS SPECTROMETRY [LARGE SCALE ANALYSIS]</scope>
    <source>
        <tissue>Brain</tissue>
        <tissue>Brown adipose tissue</tissue>
        <tissue>Heart</tissue>
        <tissue>Kidney</tissue>
        <tissue>Liver</tissue>
        <tissue>Lung</tissue>
        <tissue>Spleen</tissue>
        <tissue>Testis</tissue>
    </source>
</reference>
<reference key="13">
    <citation type="journal article" date="2010" name="J. Biol. Chem.">
        <title>Mammalian SUN protein interaction networks at the inner nuclear membrane and their role in laminopathy disease processes.</title>
        <authorList>
            <person name="Haque F."/>
            <person name="Mazzeo D."/>
            <person name="Patel J.T."/>
            <person name="Smallwood D.T."/>
            <person name="Ellis J.A."/>
            <person name="Shanahan C.M."/>
            <person name="Shackleton S."/>
        </authorList>
    </citation>
    <scope>SUBCELLULAR LOCATION</scope>
    <scope>INTERACTION WITH EMD AND LMNA</scope>
    <scope>DOMAIN</scope>
    <scope>ASSOCIATION WITH THE NUCLEOSKELETON</scope>
</reference>
<reference key="14">
    <citation type="journal article" date="2010" name="Science">
        <title>Linear arrays of nuclear envelope proteins harness retrograde actin flow for nuclear movement.</title>
        <authorList>
            <person name="Luxton G.W."/>
            <person name="Gomes E.R."/>
            <person name="Folker E.S."/>
            <person name="Vintinner E."/>
            <person name="Gundersen G.G."/>
        </authorList>
    </citation>
    <scope>FUNCTION</scope>
</reference>
<reference key="15">
    <citation type="journal article" date="2011" name="Hum. Mol. Genet.">
        <title>KASH protein Syne-2/Nesprin-2 and SUN proteins SUN1/2 mediate nuclear migration during mammalian retinal development.</title>
        <authorList>
            <person name="Yu J."/>
            <person name="Lei K."/>
            <person name="Zhou M."/>
            <person name="Craft C.M."/>
            <person name="Xu G."/>
            <person name="Xu T."/>
            <person name="Zhuang Y."/>
            <person name="Xu R."/>
            <person name="Han M."/>
        </authorList>
    </citation>
    <scope>FUNCTION</scope>
    <scope>SUBUNIT</scope>
</reference>
<reference key="16">
    <citation type="journal article" date="2012" name="J. Cell Sci.">
        <title>Samp1 is a component of TAN lines and is required for nuclear movement.</title>
        <authorList>
            <person name="Borrego-Pinto J."/>
            <person name="Jegou T."/>
            <person name="Osorio D.S."/>
            <person name="Aurade F."/>
            <person name="Gorjanacz M."/>
            <person name="Koch B."/>
            <person name="Mattaj I.W."/>
            <person name="Gomes E.R."/>
        </authorList>
    </citation>
    <scope>INTERACTION WITH TMEM201</scope>
</reference>
<reference key="17">
    <citation type="journal article" date="2012" name="PLoS ONE">
        <title>LINC complexes mediate the positioning of cone photoreceptor nuclei in mouse retina.</title>
        <authorList>
            <person name="Razafsky D."/>
            <person name="Blecher N."/>
            <person name="Markov A."/>
            <person name="Stewart-Hutchinson P.J."/>
            <person name="Hodzic D."/>
        </authorList>
    </citation>
    <scope>FUNCTION</scope>
    <scope>SUBUNIT</scope>
</reference>
<reference key="18">
    <citation type="journal article" date="2014" name="PLoS Genet.">
        <title>Analysis of meiosis in SUN1 deficient mice reveals a distinct role of SUN2 in mammalian meiotic LINC complex formation and function.</title>
        <authorList>
            <person name="Link J."/>
            <person name="Leubner M."/>
            <person name="Schmitt J."/>
            <person name="Goeb E."/>
            <person name="Benavente R."/>
            <person name="Jeang K.T."/>
            <person name="Xu R."/>
            <person name="Alsheimer M."/>
        </authorList>
    </citation>
    <scope>FUNCTION</scope>
    <scope>SUBUNIT</scope>
    <scope>SUBCELLULAR LOCATION</scope>
</reference>
<reference key="19">
    <citation type="journal article" date="2018" name="J. Biochem.">
        <title>Jaw1/LRMP has a role in maintaining nuclear shape via interaction with SUN proteins.</title>
        <authorList>
            <person name="Kozono T."/>
            <person name="Tadahira K."/>
            <person name="Okumura W."/>
            <person name="Itai N."/>
            <person name="Tamura-Nakano M."/>
            <person name="Dohi T."/>
            <person name="Tonozuka T."/>
            <person name="Nishikawa A."/>
        </authorList>
    </citation>
    <scope>INTERACTION WITH IRAG2</scope>
</reference>
<reference key="20">
    <citation type="journal article" date="2016" name="Structure">
        <title>Coiled-coil domains of SUN proteins as intrinsic dynamic regulators.</title>
        <authorList>
            <person name="Nie S."/>
            <person name="Ke H."/>
            <person name="Gao F."/>
            <person name="Ren J."/>
            <person name="Wang M."/>
            <person name="Huo L."/>
            <person name="Gong W."/>
            <person name="Feng W."/>
        </authorList>
    </citation>
    <scope>X-RAY CRYSTALLOGRAPHY (2.01 ANGSTROMS) OF 410-731</scope>
    <scope>SUBUNIT</scope>
    <scope>DOMAIN</scope>
    <scope>MUTAGENESIS OF LEU-432; LEU-435 AND GLN-446</scope>
</reference>
<keyword id="KW-0002">3D-structure</keyword>
<keyword id="KW-0025">Alternative splicing</keyword>
<keyword id="KW-0175">Coiled coil</keyword>
<keyword id="KW-1015">Disulfide bond</keyword>
<keyword id="KW-0967">Endosome</keyword>
<keyword id="KW-0325">Glycoprotein</keyword>
<keyword id="KW-0469">Meiosis</keyword>
<keyword id="KW-0472">Membrane</keyword>
<keyword id="KW-0539">Nucleus</keyword>
<keyword id="KW-0597">Phosphoprotein</keyword>
<keyword id="KW-1185">Reference proteome</keyword>
<keyword id="KW-0735">Signal-anchor</keyword>
<keyword id="KW-0812">Transmembrane</keyword>
<keyword id="KW-1133">Transmembrane helix</keyword>
<comment type="function">
    <text evidence="7 9 11 12 14 15 17 18 24">As a component of the LINC (LInker of Nucleoskeleton and Cytoskeleton) complex, involved in the connection between the nuclear lamina and the cytoskeleton. The nucleocytoplasmic interactions established by the LINC complex play an important role in the transmission of mechanical forces across the nuclear envelope and in nuclear movement and positioning. Specifically, SYNE2 and SUN2 assemble in arrays of transmembrane actin-associated nuclear (TAN) lines which are bound to F-actin cables and couple the nucleus to retrograde actin flow during actin-dependent nuclear movement. Required for interkinetic nuclear migration (INM) and essential for nucleokinesis and centrosome-nucleus coupling during radial neuronal migration in the cerebral cortex and during glial migration. Required for nuclear migration in retinal photoreceptor progenitors implicating association with cytoplasmic dynein-dynactin and kinesin motor complexes, and probably B-type lamins; SUN1 and SUN2 seem to act redundantly. The SUN1/2:KASH5 LINC complex couples telomeres to microtubules during meiosis; SUN1 and SUN2 seem to act at least partial redundantly. Anchors chromosome movement in the prophase of meiosis and is involved in selective gene expression of coding and non-coding RNAs needed for gametogenesis. Required for telomere attachment to nuclear envelope and gametogenesis. May also function on endocytic vesicles as a receptor for Rab5-GDP and participate in the activation of Rab5.</text>
</comment>
<comment type="subunit">
    <text evidence="2 15 16 17 20 25">Core component of the LINC complex which is composed of inner nuclear membrane SUN domain-containing proteins coupled to outer nuclear membrane KASH domain-containing nesprins. SUN and KASH domain-containing proteins seem to bind each other promiscuously; however, differentially expression of LINC complex constituents is giving rise to specific assemblies. At least SUN1/2-containing core LINC complexes are proposed to be hexameric composed of three protomers of each KASH and SUN domain-containing protein. Interacts with SYNE2; the SUN2:SYNE2/KASH2 LINC complex is a heterohexamer; the homotrimeric cloverleave-like conformation of the SUN domain is a prerequisite for LINC complex formation in which three separate SYNE2/KASH2 peptides bind at the interface of adjacent SUN domains. Component of a probable SUN2:KASH5 LINC complex. Interacts with SYNE1 and SYNE3; probably forming respective LINC complexes. Interacts with A-type lamin. Interaction with lamins B1 and C is hardly detectable. Interacts with EMD. Interacts with RAB5A. Interacts with TMEM43 and TMEM201. Interacts with IRAG2 (PubMed:29878215).</text>
</comment>
<comment type="interaction">
    <interactant intactId="EBI-646914">
        <id>Q8BJS4</id>
    </interactant>
    <interactant intactId="EBI-12591474">
        <id>A2A8U2-3</id>
        <label>Tmem201</label>
    </interactant>
    <organismsDiffer>false</organismsDiffer>
    <experiments>3</experiments>
</comment>
<comment type="interaction">
    <interactant intactId="EBI-16189250">
        <id>Q8BJS4-3</id>
    </interactant>
    <interactant intactId="EBI-16189250">
        <id>Q8BJS4-3</id>
        <label>Sun2</label>
    </interactant>
    <organismsDiffer>false</organismsDiffer>
    <experiments>4</experiments>
</comment>
<comment type="interaction">
    <interactant intactId="EBI-16189250">
        <id>Q8BJS4-3</id>
    </interactant>
    <interactant intactId="EBI-16108623">
        <id>Q6ZWQ0-1</id>
        <label>Syne2</label>
    </interactant>
    <organismsDiffer>false</organismsDiffer>
    <experiments>2</experiments>
</comment>
<comment type="subcellular location">
    <subcellularLocation>
        <location evidence="13">Nucleus inner membrane</location>
        <topology evidence="2">Single-pass type II membrane protein</topology>
    </subcellularLocation>
    <subcellularLocation>
        <location evidence="8 11 12 13">Nucleus envelope</location>
    </subcellularLocation>
    <subcellularLocation>
        <location evidence="2">Endosome membrane</location>
        <topology evidence="2">Single-pass type II membrane protein</topology>
    </subcellularLocation>
    <text evidence="18">Colocalizes with KASH5 at sites of telomere attachment in meiocytes.</text>
</comment>
<comment type="alternative products">
    <event type="alternative splicing"/>
    <isoform>
        <id>Q8BJS4-1</id>
        <name>1</name>
        <sequence type="displayed"/>
    </isoform>
    <isoform>
        <id>Q8BJS4-2</id>
        <name>2</name>
        <sequence type="described" ref="VSP_039554"/>
    </isoform>
    <isoform>
        <id>Q8BJS4-3</id>
        <name>3</name>
        <sequence type="described" ref="VSP_039553"/>
    </isoform>
</comment>
<comment type="tissue specificity">
    <text evidence="6">Highly expressed in heart, placenta and muscle.</text>
</comment>
<comment type="domain">
    <text evidence="2 19">The proximal coiled coil domain mediates trimerization required for binding to nesprins. The distal coiled coil domain is proposed to dynamically regulate the oligomeric state by locking the SUN domain in an inactive confirmation (PubMed:26688217). The coiled coil domains are proposed to be involved in load-bearing and force transmission from the cytoskeleton (By similarity).</text>
</comment>
<comment type="domain">
    <text evidence="13">The SUN domain may play a role in nuclear anchoring and/or migration.</text>
</comment>
<comment type="PTM">
    <text evidence="2">The disulfide bond with SYNE2 is required for stability of the SUN2:SYNE2/KASH2 LINC complex under tensile forces though not required for the interaction. The disulfide bond is proposed to be conserved in LINC complexes involved in force transmission.</text>
</comment>
<proteinExistence type="evidence at protein level"/>
<dbReference type="EMBL" id="AY682987">
    <property type="protein sequence ID" value="AAT90499.1"/>
    <property type="molecule type" value="mRNA"/>
</dbReference>
<dbReference type="EMBL" id="AK128958">
    <property type="protein sequence ID" value="BAC87662.1"/>
    <property type="molecule type" value="mRNA"/>
</dbReference>
<dbReference type="EMBL" id="AK080116">
    <property type="protein sequence ID" value="BAC37829.1"/>
    <property type="molecule type" value="mRNA"/>
</dbReference>
<dbReference type="EMBL" id="AK156246">
    <property type="protein sequence ID" value="BAE33640.1"/>
    <property type="molecule type" value="mRNA"/>
</dbReference>
<dbReference type="EMBL" id="AK171058">
    <property type="protein sequence ID" value="BAE42217.1"/>
    <property type="molecule type" value="mRNA"/>
</dbReference>
<dbReference type="EMBL" id="CH466550">
    <property type="protein sequence ID" value="EDL04635.1"/>
    <property type="molecule type" value="Genomic_DNA"/>
</dbReference>
<dbReference type="CCDS" id="CCDS27649.1">
    <molecule id="Q8BJS4-3"/>
</dbReference>
<dbReference type="CCDS" id="CCDS56992.1">
    <molecule id="Q8BJS4-2"/>
</dbReference>
<dbReference type="CCDS" id="CCDS56993.1">
    <molecule id="Q8BJS4-1"/>
</dbReference>
<dbReference type="RefSeq" id="NP_001192274.1">
    <molecule id="Q8BJS4-1"/>
    <property type="nucleotide sequence ID" value="NM_001205345.1"/>
</dbReference>
<dbReference type="RefSeq" id="NP_001192275.1">
    <molecule id="Q8BJS4-2"/>
    <property type="nucleotide sequence ID" value="NM_001205346.1"/>
</dbReference>
<dbReference type="RefSeq" id="NP_919323.2">
    <molecule id="Q8BJS4-3"/>
    <property type="nucleotide sequence ID" value="NM_194342.3"/>
</dbReference>
<dbReference type="PDB" id="5ED8">
    <property type="method" value="X-ray"/>
    <property type="resolution" value="2.50 A"/>
    <property type="chains" value="A=470-731"/>
</dbReference>
<dbReference type="PDB" id="5ED9">
    <property type="method" value="X-ray"/>
    <property type="resolution" value="2.01 A"/>
    <property type="chains" value="A/B/C=410-481"/>
</dbReference>
<dbReference type="PDBsum" id="5ED8"/>
<dbReference type="PDBsum" id="5ED9"/>
<dbReference type="SMR" id="Q8BJS4"/>
<dbReference type="BioGRID" id="230179">
    <property type="interactions" value="9"/>
</dbReference>
<dbReference type="DIP" id="DIP-49694N"/>
<dbReference type="FunCoup" id="Q8BJS4">
    <property type="interactions" value="566"/>
</dbReference>
<dbReference type="IntAct" id="Q8BJS4">
    <property type="interactions" value="7"/>
</dbReference>
<dbReference type="STRING" id="10090.ENSMUSP00000047864"/>
<dbReference type="GlyConnect" id="2745">
    <property type="glycosylation" value="3 N-Linked glycans (1 site)"/>
</dbReference>
<dbReference type="GlyCosmos" id="Q8BJS4">
    <property type="glycosylation" value="1 site, 3 glycans"/>
</dbReference>
<dbReference type="GlyGen" id="Q8BJS4">
    <property type="glycosylation" value="2 sites, 4 N-linked glycans (1 site), 1 O-linked glycan (1 site)"/>
</dbReference>
<dbReference type="iPTMnet" id="Q8BJS4"/>
<dbReference type="PhosphoSitePlus" id="Q8BJS4"/>
<dbReference type="SwissPalm" id="Q8BJS4"/>
<dbReference type="jPOST" id="Q8BJS4"/>
<dbReference type="PaxDb" id="10090-ENSMUSP00000086724"/>
<dbReference type="PeptideAtlas" id="Q8BJS4"/>
<dbReference type="ProteomicsDB" id="254696">
    <molecule id="Q8BJS4-1"/>
</dbReference>
<dbReference type="ProteomicsDB" id="254697">
    <molecule id="Q8BJS4-2"/>
</dbReference>
<dbReference type="ProteomicsDB" id="254698">
    <molecule id="Q8BJS4-3"/>
</dbReference>
<dbReference type="Pumba" id="Q8BJS4"/>
<dbReference type="Antibodypedia" id="228">
    <property type="antibodies" value="198 antibodies from 27 providers"/>
</dbReference>
<dbReference type="Ensembl" id="ENSMUST00000046259.14">
    <molecule id="Q8BJS4-1"/>
    <property type="protein sequence ID" value="ENSMUSP00000047864.8"/>
    <property type="gene ID" value="ENSMUSG00000042524.15"/>
</dbReference>
<dbReference type="Ensembl" id="ENSMUST00000089311.11">
    <molecule id="Q8BJS4-3"/>
    <property type="protein sequence ID" value="ENSMUSP00000086724.5"/>
    <property type="gene ID" value="ENSMUSG00000042524.15"/>
</dbReference>
<dbReference type="Ensembl" id="ENSMUST00000100439.10">
    <molecule id="Q8BJS4-2"/>
    <property type="protein sequence ID" value="ENSMUSP00000098006.4"/>
    <property type="gene ID" value="ENSMUSG00000042524.15"/>
</dbReference>
<dbReference type="GeneID" id="223697"/>
<dbReference type="KEGG" id="mmu:223697"/>
<dbReference type="UCSC" id="uc007wuh.3">
    <molecule id="Q8BJS4-1"/>
    <property type="organism name" value="mouse"/>
</dbReference>
<dbReference type="UCSC" id="uc007wui.3">
    <molecule id="Q8BJS4-2"/>
    <property type="organism name" value="mouse"/>
</dbReference>
<dbReference type="UCSC" id="uc011zwc.2">
    <molecule id="Q8BJS4-3"/>
    <property type="organism name" value="mouse"/>
</dbReference>
<dbReference type="AGR" id="MGI:2443011"/>
<dbReference type="CTD" id="25777"/>
<dbReference type="MGI" id="MGI:2443011">
    <property type="gene designation" value="Sun2"/>
</dbReference>
<dbReference type="VEuPathDB" id="HostDB:ENSMUSG00000042524"/>
<dbReference type="eggNOG" id="KOG2687">
    <property type="taxonomic scope" value="Eukaryota"/>
</dbReference>
<dbReference type="GeneTree" id="ENSGT00940000160024"/>
<dbReference type="HOGENOM" id="CLU_012938_1_0_1"/>
<dbReference type="InParanoid" id="Q8BJS4"/>
<dbReference type="OMA" id="WAASCFW"/>
<dbReference type="OrthoDB" id="342281at2759"/>
<dbReference type="PhylomeDB" id="Q8BJS4"/>
<dbReference type="TreeFam" id="TF323915"/>
<dbReference type="BioGRID-ORCS" id="223697">
    <property type="hits" value="6 hits in 77 CRISPR screens"/>
</dbReference>
<dbReference type="ChiTaRS" id="Sun2">
    <property type="organism name" value="mouse"/>
</dbReference>
<dbReference type="EvolutionaryTrace" id="Q8BJS4"/>
<dbReference type="PRO" id="PR:Q8BJS4"/>
<dbReference type="Proteomes" id="UP000000589">
    <property type="component" value="Chromosome 15"/>
</dbReference>
<dbReference type="RNAct" id="Q8BJS4">
    <property type="molecule type" value="protein"/>
</dbReference>
<dbReference type="Bgee" id="ENSMUSG00000042524">
    <property type="expression patterns" value="Expressed in granulocyte and 251 other cell types or tissues"/>
</dbReference>
<dbReference type="ExpressionAtlas" id="Q8BJS4">
    <property type="expression patterns" value="baseline and differential"/>
</dbReference>
<dbReference type="GO" id="GO:0000781">
    <property type="term" value="C:chromosome, telomeric region"/>
    <property type="evidence" value="ECO:0000314"/>
    <property type="project" value="MGI"/>
</dbReference>
<dbReference type="GO" id="GO:0000794">
    <property type="term" value="C:condensed nuclear chromosome"/>
    <property type="evidence" value="ECO:0000314"/>
    <property type="project" value="MGI"/>
</dbReference>
<dbReference type="GO" id="GO:0010008">
    <property type="term" value="C:endosome membrane"/>
    <property type="evidence" value="ECO:0007669"/>
    <property type="project" value="UniProtKB-SubCell"/>
</dbReference>
<dbReference type="GO" id="GO:0034993">
    <property type="term" value="C:meiotic nuclear membrane microtubule tethering complex"/>
    <property type="evidence" value="ECO:0007669"/>
    <property type="project" value="Ensembl"/>
</dbReference>
<dbReference type="GO" id="GO:0005635">
    <property type="term" value="C:nuclear envelope"/>
    <property type="evidence" value="ECO:0000314"/>
    <property type="project" value="MGI"/>
</dbReference>
<dbReference type="GO" id="GO:0005637">
    <property type="term" value="C:nuclear inner membrane"/>
    <property type="evidence" value="ECO:0000314"/>
    <property type="project" value="UniProtKB"/>
</dbReference>
<dbReference type="GO" id="GO:0140444">
    <property type="term" value="F:cytoskeleton-nuclear membrane anchor activity"/>
    <property type="evidence" value="ECO:0007669"/>
    <property type="project" value="Ensembl"/>
</dbReference>
<dbReference type="GO" id="GO:0042802">
    <property type="term" value="F:identical protein binding"/>
    <property type="evidence" value="ECO:0000353"/>
    <property type="project" value="IntAct"/>
</dbReference>
<dbReference type="GO" id="GO:0005521">
    <property type="term" value="F:lamin binding"/>
    <property type="evidence" value="ECO:0007669"/>
    <property type="project" value="Ensembl"/>
</dbReference>
<dbReference type="GO" id="GO:0051642">
    <property type="term" value="P:centrosome localization"/>
    <property type="evidence" value="ECO:0000315"/>
    <property type="project" value="UniProtKB"/>
</dbReference>
<dbReference type="GO" id="GO:0051321">
    <property type="term" value="P:meiotic cell cycle"/>
    <property type="evidence" value="ECO:0007669"/>
    <property type="project" value="UniProtKB-KW"/>
</dbReference>
<dbReference type="GO" id="GO:0006998">
    <property type="term" value="P:nuclear envelope organization"/>
    <property type="evidence" value="ECO:0000266"/>
    <property type="project" value="MGI"/>
</dbReference>
<dbReference type="GO" id="GO:0090292">
    <property type="term" value="P:nuclear matrix anchoring at nuclear membrane"/>
    <property type="evidence" value="ECO:0007669"/>
    <property type="project" value="Ensembl"/>
</dbReference>
<dbReference type="GO" id="GO:0031022">
    <property type="term" value="P:nuclear migration along microfilament"/>
    <property type="evidence" value="ECO:0000315"/>
    <property type="project" value="UniProtKB"/>
</dbReference>
<dbReference type="GO" id="GO:0021817">
    <property type="term" value="P:nucleokinesis involved in cell motility in cerebral cortex radial glia guided migration"/>
    <property type="evidence" value="ECO:0000315"/>
    <property type="project" value="UniProtKB"/>
</dbReference>
<dbReference type="GO" id="GO:0030335">
    <property type="term" value="P:positive regulation of cell migration"/>
    <property type="evidence" value="ECO:0000315"/>
    <property type="project" value="UniProtKB"/>
</dbReference>
<dbReference type="CDD" id="cd21438">
    <property type="entry name" value="SUN2_cc1"/>
    <property type="match status" value="1"/>
</dbReference>
<dbReference type="FunFam" id="2.60.120.260:FF:000009">
    <property type="entry name" value="SUN domain-containing protein 1 isoform X1"/>
    <property type="match status" value="1"/>
</dbReference>
<dbReference type="Gene3D" id="2.60.120.260">
    <property type="entry name" value="Galactose-binding domain-like"/>
    <property type="match status" value="1"/>
</dbReference>
<dbReference type="InterPro" id="IPR045119">
    <property type="entry name" value="SUN1-5"/>
</dbReference>
<dbReference type="InterPro" id="IPR040994">
    <property type="entry name" value="Sun_CC2"/>
</dbReference>
<dbReference type="InterPro" id="IPR012919">
    <property type="entry name" value="SUN_dom"/>
</dbReference>
<dbReference type="PANTHER" id="PTHR12911">
    <property type="entry name" value="SAD1/UNC-84-LIKE PROTEIN-RELATED"/>
    <property type="match status" value="1"/>
</dbReference>
<dbReference type="PANTHER" id="PTHR12911:SF22">
    <property type="entry name" value="SUN DOMAIN-CONTAINING PROTEIN 2"/>
    <property type="match status" value="1"/>
</dbReference>
<dbReference type="Pfam" id="PF18580">
    <property type="entry name" value="HTH_SUN2"/>
    <property type="match status" value="1"/>
</dbReference>
<dbReference type="Pfam" id="PF07738">
    <property type="entry name" value="Sad1_UNC"/>
    <property type="match status" value="1"/>
</dbReference>
<dbReference type="PROSITE" id="PS51469">
    <property type="entry name" value="SUN"/>
    <property type="match status" value="1"/>
</dbReference>
<feature type="chain" id="PRO_0000218914" description="SUN domain-containing protein 2">
    <location>
        <begin position="1"/>
        <end position="731"/>
    </location>
</feature>
<feature type="topological domain" description="Nuclear" evidence="1">
    <location>
        <begin position="1"/>
        <end position="226"/>
    </location>
</feature>
<feature type="transmembrane region" description="Helical" evidence="3">
    <location>
        <begin position="227"/>
        <end position="247"/>
    </location>
</feature>
<feature type="topological domain" description="Perinuclear space">
    <location>
        <begin position="248"/>
        <end position="731"/>
    </location>
</feature>
<feature type="domain" description="SUN" evidence="4">
    <location>
        <begin position="569"/>
        <end position="730"/>
    </location>
</feature>
<feature type="region of interest" description="LMNA-binding">
    <location>
        <begin position="1"/>
        <end position="128"/>
    </location>
</feature>
<feature type="region of interest" description="Disordered" evidence="5">
    <location>
        <begin position="1"/>
        <end position="69"/>
    </location>
</feature>
<feature type="region of interest" description="Disordered" evidence="5">
    <location>
        <begin position="106"/>
        <end position="142"/>
    </location>
</feature>
<feature type="region of interest" description="Sufficient for interaction with SYNE1 and SYNE2" evidence="2">
    <location>
        <begin position="521"/>
        <end position="731"/>
    </location>
</feature>
<feature type="coiled-coil region" evidence="3">
    <location>
        <begin position="396"/>
        <end position="452"/>
    </location>
</feature>
<feature type="coiled-coil region" evidence="3">
    <location>
        <begin position="486"/>
        <end position="519"/>
    </location>
</feature>
<feature type="compositionally biased region" description="Low complexity" evidence="5">
    <location>
        <begin position="18"/>
        <end position="33"/>
    </location>
</feature>
<feature type="modified residue" description="Phosphoserine" evidence="27">
    <location>
        <position position="12"/>
    </location>
</feature>
<feature type="modified residue" description="Phosphoserine" evidence="27">
    <location>
        <position position="39"/>
    </location>
</feature>
<feature type="modified residue" description="Phosphoserine" evidence="27">
    <location>
        <position position="55"/>
    </location>
</feature>
<feature type="modified residue" description="Phosphothreonine" evidence="27">
    <location>
        <position position="117"/>
    </location>
</feature>
<feature type="modified residue" description="Phosphoserine" evidence="27">
    <location>
        <position position="120"/>
    </location>
</feature>
<feature type="modified residue" description="Phosphoserine" evidence="27">
    <location>
        <position position="123"/>
    </location>
</feature>
<feature type="modified residue" description="Phosphoserine" evidence="27">
    <location>
        <position position="147"/>
    </location>
</feature>
<feature type="glycosylation site" description="N-linked (GlcNAc...) asparagine" evidence="10">
    <location>
        <position position="650"/>
    </location>
</feature>
<feature type="disulfide bond" description="Interchain (with C-6851 in SYNE2)" evidence="2">
    <location>
        <position position="577"/>
    </location>
</feature>
<feature type="splice variant" id="VSP_039553" description="In isoform 3." evidence="23">
    <location>
        <begin position="154"/>
        <end position="185"/>
    </location>
</feature>
<feature type="splice variant" id="VSP_039554" description="In isoform 2." evidence="21 22">
    <location>
        <begin position="217"/>
        <end position="218"/>
    </location>
</feature>
<feature type="mutagenesis site" description="Disrupts homotrimerization; disrupts interaction with SYNE2; when associated with A-435." evidence="19">
    <original>L</original>
    <variation>A</variation>
    <location>
        <position position="432"/>
    </location>
</feature>
<feature type="mutagenesis site" description="Disrupts homotrimerization; disrupts interaction with SYNE2; when associated with A-432." evidence="19">
    <original>L</original>
    <variation>A</variation>
    <location>
        <position position="435"/>
    </location>
</feature>
<feature type="mutagenesis site" description="Stabilizes homotrimerization; no effect on interaction with SYNE2." evidence="19">
    <original>Q</original>
    <variation>L</variation>
    <location>
        <position position="446"/>
    </location>
</feature>
<feature type="sequence conflict" description="In Ref. 3; BAE42217." evidence="24" ref="3">
    <original>S</original>
    <variation>G</variation>
    <location>
        <position position="106"/>
    </location>
</feature>
<feature type="sequence conflict" description="In Ref. 2; BAC87662." evidence="24" ref="2">
    <original>M</original>
    <variation>V</variation>
    <location>
        <position position="412"/>
    </location>
</feature>
<feature type="sequence conflict" description="In Ref. 2; BAC87662." evidence="24" ref="2">
    <original>D</original>
    <variation>Y</variation>
    <location>
        <position position="451"/>
    </location>
</feature>
<feature type="sequence conflict" description="In Ref. 3; BAE42217." evidence="24" ref="3">
    <original>E</original>
    <variation>K</variation>
    <location>
        <position position="579"/>
    </location>
</feature>
<feature type="helix" evidence="29">
    <location>
        <begin position="414"/>
        <end position="467"/>
    </location>
</feature>
<feature type="helix" evidence="29">
    <location>
        <begin position="471"/>
        <end position="478"/>
    </location>
</feature>
<feature type="helix" evidence="28">
    <location>
        <begin position="495"/>
        <end position="510"/>
    </location>
</feature>
<feature type="helix" evidence="28">
    <location>
        <begin position="511"/>
        <end position="513"/>
    </location>
</feature>
<feature type="helix" evidence="28">
    <location>
        <begin position="518"/>
        <end position="529"/>
    </location>
</feature>
<feature type="helix" evidence="28">
    <location>
        <begin position="539"/>
        <end position="549"/>
    </location>
</feature>
<feature type="helix" evidence="28">
    <location>
        <begin position="566"/>
        <end position="568"/>
    </location>
</feature>
<feature type="helix" evidence="28">
    <location>
        <begin position="574"/>
        <end position="576"/>
    </location>
</feature>
<feature type="strand" evidence="28">
    <location>
        <begin position="584"/>
        <end position="588"/>
    </location>
</feature>
<feature type="strand" evidence="28">
    <location>
        <begin position="594"/>
        <end position="598"/>
    </location>
</feature>
<feature type="helix" evidence="28">
    <location>
        <begin position="602"/>
        <end position="606"/>
    </location>
</feature>
<feature type="strand" evidence="28">
    <location>
        <begin position="615"/>
        <end position="621"/>
    </location>
</feature>
<feature type="strand" evidence="28">
    <location>
        <begin position="623"/>
        <end position="641"/>
    </location>
</feature>
<feature type="helix" evidence="28">
    <location>
        <begin position="645"/>
        <end position="647"/>
    </location>
</feature>
<feature type="helix" evidence="28">
    <location>
        <begin position="649"/>
        <end position="651"/>
    </location>
</feature>
<feature type="strand" evidence="28">
    <location>
        <begin position="659"/>
        <end position="667"/>
    </location>
</feature>
<feature type="strand" evidence="28">
    <location>
        <begin position="674"/>
        <end position="680"/>
    </location>
</feature>
<feature type="strand" evidence="28">
    <location>
        <begin position="687"/>
        <end position="692"/>
    </location>
</feature>
<feature type="strand" evidence="28">
    <location>
        <begin position="701"/>
        <end position="708"/>
    </location>
</feature>
<feature type="strand" evidence="28">
    <location>
        <begin position="711"/>
        <end position="713"/>
    </location>
</feature>
<feature type="strand" evidence="28">
    <location>
        <begin position="715"/>
        <end position="729"/>
    </location>
</feature>
<organism>
    <name type="scientific">Mus musculus</name>
    <name type="common">Mouse</name>
    <dbReference type="NCBI Taxonomy" id="10090"/>
    <lineage>
        <taxon>Eukaryota</taxon>
        <taxon>Metazoa</taxon>
        <taxon>Chordata</taxon>
        <taxon>Craniata</taxon>
        <taxon>Vertebrata</taxon>
        <taxon>Euteleostomi</taxon>
        <taxon>Mammalia</taxon>
        <taxon>Eutheria</taxon>
        <taxon>Euarchontoglires</taxon>
        <taxon>Glires</taxon>
        <taxon>Rodentia</taxon>
        <taxon>Myomorpha</taxon>
        <taxon>Muroidea</taxon>
        <taxon>Muridae</taxon>
        <taxon>Murinae</taxon>
        <taxon>Mus</taxon>
        <taxon>Mus</taxon>
    </lineage>
</organism>
<protein>
    <recommendedName>
        <fullName>SUN domain-containing protein 2</fullName>
    </recommendedName>
    <alternativeName>
        <fullName>Protein unc-84 homolog B</fullName>
    </alternativeName>
    <alternativeName>
        <fullName>Sad1/unc-84 protein-like 2</fullName>
    </alternativeName>
</protein>
<accession>Q8BJS4</accession>
<accession>Q3TBU0</accession>
<accession>Q3U160</accession>
<accession>Q6B4H2</accession>